<evidence type="ECO:0000255" key="1">
    <source>
        <dbReference type="HAMAP-Rule" id="MF_00746"/>
    </source>
</evidence>
<gene>
    <name evidence="1" type="primary">sprT</name>
    <name type="ordered locus">BWG_2666</name>
</gene>
<sequence>MKTSRLPIAIQQAVMRRLREKLAQANLKLGRNYPEPKLSYTQRGTSAGTAWLESYEIRLNPVLLLENSEAFIEEVVPHELAHLLVWKHFGRVAPHGKEWKWMMENVLGVPARRTHQFELQSVRRNTFPYRCKCQEHQLTVRRHNRVVRGEAVYRCVHCGEQLVAK</sequence>
<accession>C5A0L3</accession>
<reference key="1">
    <citation type="journal article" date="2009" name="J. Bacteriol.">
        <title>Genomic sequencing reveals regulatory mutations and recombinational events in the widely used MC4100 lineage of Escherichia coli K-12.</title>
        <authorList>
            <person name="Ferenci T."/>
            <person name="Zhou Z."/>
            <person name="Betteridge T."/>
            <person name="Ren Y."/>
            <person name="Liu Y."/>
            <person name="Feng L."/>
            <person name="Reeves P.R."/>
            <person name="Wang L."/>
        </authorList>
    </citation>
    <scope>NUCLEOTIDE SEQUENCE [LARGE SCALE GENOMIC DNA]</scope>
    <source>
        <strain>K12 / MC4100 / BW2952</strain>
    </source>
</reference>
<dbReference type="EMBL" id="CP001396">
    <property type="protein sequence ID" value="ACR62518.1"/>
    <property type="molecule type" value="Genomic_DNA"/>
</dbReference>
<dbReference type="RefSeq" id="WP_001300769.1">
    <property type="nucleotide sequence ID" value="NC_012759.1"/>
</dbReference>
<dbReference type="SMR" id="C5A0L3"/>
<dbReference type="KEGG" id="ebw:BWG_2666"/>
<dbReference type="HOGENOM" id="CLU_113336_0_1_6"/>
<dbReference type="GO" id="GO:0005737">
    <property type="term" value="C:cytoplasm"/>
    <property type="evidence" value="ECO:0007669"/>
    <property type="project" value="UniProtKB-SubCell"/>
</dbReference>
<dbReference type="GO" id="GO:0008270">
    <property type="term" value="F:zinc ion binding"/>
    <property type="evidence" value="ECO:0007669"/>
    <property type="project" value="UniProtKB-UniRule"/>
</dbReference>
<dbReference type="GO" id="GO:0006950">
    <property type="term" value="P:response to stress"/>
    <property type="evidence" value="ECO:0007669"/>
    <property type="project" value="UniProtKB-ARBA"/>
</dbReference>
<dbReference type="Gene3D" id="3.30.2010.10">
    <property type="entry name" value="Metalloproteases ('zincins'), catalytic domain"/>
    <property type="match status" value="1"/>
</dbReference>
<dbReference type="HAMAP" id="MF_00746">
    <property type="entry name" value="SprT"/>
    <property type="match status" value="1"/>
</dbReference>
<dbReference type="InterPro" id="IPR006640">
    <property type="entry name" value="SprT-like_domain"/>
</dbReference>
<dbReference type="InterPro" id="IPR035240">
    <property type="entry name" value="SprT_Zn_ribbon"/>
</dbReference>
<dbReference type="InterPro" id="IPR023483">
    <property type="entry name" value="Uncharacterised_SprT"/>
</dbReference>
<dbReference type="NCBIfam" id="NF003421">
    <property type="entry name" value="PRK04860.1"/>
    <property type="match status" value="1"/>
</dbReference>
<dbReference type="PANTHER" id="PTHR38773">
    <property type="entry name" value="PROTEIN SPRT"/>
    <property type="match status" value="1"/>
</dbReference>
<dbReference type="PANTHER" id="PTHR38773:SF1">
    <property type="entry name" value="PROTEIN SPRT"/>
    <property type="match status" value="1"/>
</dbReference>
<dbReference type="Pfam" id="PF10263">
    <property type="entry name" value="SprT-like"/>
    <property type="match status" value="1"/>
</dbReference>
<dbReference type="Pfam" id="PF17283">
    <property type="entry name" value="Zn_ribbon_SprT"/>
    <property type="match status" value="1"/>
</dbReference>
<dbReference type="SMART" id="SM00731">
    <property type="entry name" value="SprT"/>
    <property type="match status" value="1"/>
</dbReference>
<dbReference type="PROSITE" id="PS00142">
    <property type="entry name" value="ZINC_PROTEASE"/>
    <property type="match status" value="1"/>
</dbReference>
<comment type="cofactor">
    <cofactor evidence="1">
        <name>Zn(2+)</name>
        <dbReference type="ChEBI" id="CHEBI:29105"/>
    </cofactor>
    <text evidence="1">Binds 1 zinc ion.</text>
</comment>
<comment type="subcellular location">
    <subcellularLocation>
        <location evidence="1">Cytoplasm</location>
    </subcellularLocation>
</comment>
<comment type="similarity">
    <text evidence="1">Belongs to the SprT family.</text>
</comment>
<protein>
    <recommendedName>
        <fullName evidence="1">Protein SprT</fullName>
    </recommendedName>
</protein>
<name>SPRT_ECOBW</name>
<organism>
    <name type="scientific">Escherichia coli (strain K12 / MC4100 / BW2952)</name>
    <dbReference type="NCBI Taxonomy" id="595496"/>
    <lineage>
        <taxon>Bacteria</taxon>
        <taxon>Pseudomonadati</taxon>
        <taxon>Pseudomonadota</taxon>
        <taxon>Gammaproteobacteria</taxon>
        <taxon>Enterobacterales</taxon>
        <taxon>Enterobacteriaceae</taxon>
        <taxon>Escherichia</taxon>
    </lineage>
</organism>
<proteinExistence type="inferred from homology"/>
<keyword id="KW-0963">Cytoplasm</keyword>
<keyword id="KW-0479">Metal-binding</keyword>
<keyword id="KW-0862">Zinc</keyword>
<feature type="chain" id="PRO_1000212840" description="Protein SprT">
    <location>
        <begin position="1"/>
        <end position="165"/>
    </location>
</feature>
<feature type="domain" description="SprT-like" evidence="1">
    <location>
        <begin position="20"/>
        <end position="163"/>
    </location>
</feature>
<feature type="active site" evidence="1">
    <location>
        <position position="79"/>
    </location>
</feature>
<feature type="binding site" evidence="1">
    <location>
        <position position="78"/>
    </location>
    <ligand>
        <name>Zn(2+)</name>
        <dbReference type="ChEBI" id="CHEBI:29105"/>
    </ligand>
</feature>
<feature type="binding site" evidence="1">
    <location>
        <position position="82"/>
    </location>
    <ligand>
        <name>Zn(2+)</name>
        <dbReference type="ChEBI" id="CHEBI:29105"/>
    </ligand>
</feature>